<organism>
    <name type="scientific">Agalychnis dacnicolor</name>
    <name type="common">Giant Mexican leaf frog</name>
    <name type="synonym">Pachymedusa dacnicolor</name>
    <dbReference type="NCBI Taxonomy" id="75988"/>
    <lineage>
        <taxon>Eukaryota</taxon>
        <taxon>Metazoa</taxon>
        <taxon>Chordata</taxon>
        <taxon>Craniata</taxon>
        <taxon>Vertebrata</taxon>
        <taxon>Euteleostomi</taxon>
        <taxon>Amphibia</taxon>
        <taxon>Batrachia</taxon>
        <taxon>Anura</taxon>
        <taxon>Neobatrachia</taxon>
        <taxon>Hyloidea</taxon>
        <taxon>Hylidae</taxon>
        <taxon>Phyllomedusinae</taxon>
        <taxon>Agalychnis</taxon>
    </lineage>
</organism>
<proteinExistence type="evidence at protein level"/>
<sequence>MAFLKKSLFLVLFLGLVSLSICEEKRENEDEEEQEDDEQSEEKRGMWSKIKNAGKAAAKASKKAAGKAALGAVSEALGEQ</sequence>
<comment type="function">
    <text evidence="1">Possesses a potent antimicrobial activity against Gram-positive and Gram-negative bacteria. Probably acts by disturbing membrane functions with its amphipathic structure (By similarity).</text>
</comment>
<comment type="subcellular location">
    <subcellularLocation>
        <location evidence="7">Secreted</location>
    </subcellularLocation>
</comment>
<comment type="tissue specificity">
    <text evidence="7">Expressed by the skin glands.</text>
</comment>
<comment type="similarity">
    <text evidence="6">Belongs to the frog skin active peptide (FSAP) family. Dermaseptin subfamily.</text>
</comment>
<comment type="online information" name="The antimicrobial peptide database">
    <link uri="https://wangapd3.com/database/query_output.php?ID=0968"/>
</comment>
<feature type="signal peptide" evidence="2">
    <location>
        <begin position="1"/>
        <end position="22"/>
    </location>
</feature>
<feature type="propeptide" id="PRO_0000007081" evidence="6">
    <location>
        <begin position="23"/>
        <end position="42"/>
    </location>
</feature>
<feature type="peptide" id="PRO_0000007082" description="Dermaseptin-DA3" evidence="7">
    <location>
        <begin position="45"/>
        <end position="77"/>
    </location>
</feature>
<feature type="propeptide" id="PRO_0000007083" evidence="6">
    <location>
        <begin position="79"/>
        <end position="80"/>
    </location>
</feature>
<feature type="region of interest" description="Disordered" evidence="3">
    <location>
        <begin position="24"/>
        <end position="48"/>
    </location>
</feature>
<feature type="compositionally biased region" description="Acidic residues" evidence="3">
    <location>
        <begin position="29"/>
        <end position="40"/>
    </location>
</feature>
<feature type="modified residue" description="Leucine amide" evidence="7">
    <location>
        <position position="77"/>
    </location>
</feature>
<accession>O93453</accession>
<evidence type="ECO:0000250" key="1"/>
<evidence type="ECO:0000255" key="2"/>
<evidence type="ECO:0000256" key="3">
    <source>
        <dbReference type="SAM" id="MobiDB-lite"/>
    </source>
</evidence>
<evidence type="ECO:0000303" key="4">
    <source>
    </source>
</evidence>
<evidence type="ECO:0000303" key="5">
    <source>
    </source>
</evidence>
<evidence type="ECO:0000305" key="6"/>
<evidence type="ECO:0000305" key="7">
    <source>
    </source>
</evidence>
<dbReference type="EMBL" id="AJ005191">
    <property type="protein sequence ID" value="CAA06428.1"/>
    <property type="molecule type" value="mRNA"/>
</dbReference>
<dbReference type="SMR" id="O93453"/>
<dbReference type="GO" id="GO:0005576">
    <property type="term" value="C:extracellular region"/>
    <property type="evidence" value="ECO:0007669"/>
    <property type="project" value="UniProtKB-SubCell"/>
</dbReference>
<dbReference type="GO" id="GO:0042742">
    <property type="term" value="P:defense response to bacterium"/>
    <property type="evidence" value="ECO:0007669"/>
    <property type="project" value="UniProtKB-KW"/>
</dbReference>
<dbReference type="InterPro" id="IPR022731">
    <property type="entry name" value="Dermaseptin_dom"/>
</dbReference>
<dbReference type="InterPro" id="IPR004275">
    <property type="entry name" value="Frog_antimicrobial_propeptide"/>
</dbReference>
<dbReference type="Pfam" id="PF12121">
    <property type="entry name" value="DD_K"/>
    <property type="match status" value="1"/>
</dbReference>
<dbReference type="Pfam" id="PF03032">
    <property type="entry name" value="FSAP_sig_propep"/>
    <property type="match status" value="1"/>
</dbReference>
<reference key="1">
    <citation type="journal article" date="1998" name="Biochim. Biophys. Acta">
        <title>Cloning of cDNAs encoding new peptides of the dermaseptin-family.</title>
        <authorList>
            <person name="Wechselberger C."/>
        </authorList>
    </citation>
    <scope>NUCLEOTIDE SEQUENCE [MRNA]</scope>
    <scope>AMIDATION AT LEU-77</scope>
    <source>
        <tissue>Skin</tissue>
    </source>
</reference>
<reference key="2">
    <citation type="journal article" date="2008" name="Peptides">
        <title>A consistent nomenclature of antimicrobial peptides isolated from frogs of the subfamily Phyllomedusinae.</title>
        <authorList>
            <person name="Amiche M."/>
            <person name="Ladram A."/>
            <person name="Nicolas P."/>
        </authorList>
    </citation>
    <scope>NOMENCLATURE</scope>
</reference>
<protein>
    <recommendedName>
        <fullName evidence="4">Dermaseptin-DA3</fullName>
        <shortName evidence="4">DRS-DA3</shortName>
    </recommendedName>
    <alternativeName>
        <fullName evidence="5">Dermaseptin PD-3-3</fullName>
    </alternativeName>
</protein>
<keyword id="KW-0027">Amidation</keyword>
<keyword id="KW-0878">Amphibian defense peptide</keyword>
<keyword id="KW-0044">Antibiotic</keyword>
<keyword id="KW-0929">Antimicrobial</keyword>
<keyword id="KW-0165">Cleavage on pair of basic residues</keyword>
<keyword id="KW-0964">Secreted</keyword>
<keyword id="KW-0732">Signal</keyword>
<name>DRS3_AGADC</name>